<sequence>MPNPAETTTQVRLDKWLWAARFYKTRSLARDQIEGGKVHYNGQRSKPGKAVEAGALIRVWQGQDEREVRVLQVSEQRKSAPLAQLLYEETEASLKKRAENSEARRFNSQFAPSPERRPDKQERRQLIKVKQY</sequence>
<reference key="1">
    <citation type="journal article" date="1997" name="J. Bacteriol.">
        <title>Quorum sensing in Aeromonas hydrophila and Aeromonas salmonicida: identification of the LuxRI homologs AhyRI and AsaRI and their cognate N-acylhomoserine lactone signal molecules.</title>
        <authorList>
            <person name="Swift S."/>
            <person name="Karlyshev A.V."/>
            <person name="Fish L."/>
            <person name="Durant E.L."/>
            <person name="Winson M.K."/>
            <person name="Chhabra S.R."/>
            <person name="Williams P."/>
            <person name="Macintyre S."/>
            <person name="Stewart G.S.A.B."/>
        </authorList>
    </citation>
    <scope>NUCLEOTIDE SEQUENCE [GENOMIC DNA]</scope>
    <source>
        <strain>ATCC 33658 / DSM 19634 / JCM 7874 / NCIMB 1102 / NCTC 12959</strain>
    </source>
</reference>
<feature type="chain" id="PRO_0000201740" description="Heat shock protein 15 homolog">
    <location>
        <begin position="1"/>
        <end position="132"/>
    </location>
</feature>
<feature type="domain" description="S4 RNA-binding" evidence="2">
    <location>
        <begin position="11"/>
        <end position="73"/>
    </location>
</feature>
<feature type="region of interest" description="Disordered" evidence="3">
    <location>
        <begin position="94"/>
        <end position="132"/>
    </location>
</feature>
<feature type="compositionally biased region" description="Basic and acidic residues" evidence="3">
    <location>
        <begin position="94"/>
        <end position="105"/>
    </location>
</feature>
<feature type="compositionally biased region" description="Basic and acidic residues" evidence="3">
    <location>
        <begin position="114"/>
        <end position="125"/>
    </location>
</feature>
<gene>
    <name type="primary">hslR</name>
</gene>
<proteinExistence type="inferred from homology"/>
<comment type="function">
    <text evidence="1">May play an important role in binding of nucleic acid. More specific for RNA (By similarity).</text>
</comment>
<comment type="similarity">
    <text evidence="4">Belongs to the HSP15 family.</text>
</comment>
<dbReference type="EMBL" id="X96968">
    <property type="protein sequence ID" value="CAA65656.1"/>
    <property type="molecule type" value="Genomic_DNA"/>
</dbReference>
<dbReference type="RefSeq" id="WP_005315870.1">
    <property type="nucleotide sequence ID" value="NZ_VOIP01000020.1"/>
</dbReference>
<dbReference type="SMR" id="Q44264"/>
<dbReference type="STRING" id="1233098.GCA_000315855_00770"/>
<dbReference type="GeneID" id="79881479"/>
<dbReference type="OMA" id="IDKYLWC"/>
<dbReference type="GO" id="GO:0003677">
    <property type="term" value="F:DNA binding"/>
    <property type="evidence" value="ECO:0007669"/>
    <property type="project" value="UniProtKB-KW"/>
</dbReference>
<dbReference type="GO" id="GO:0043023">
    <property type="term" value="F:ribosomal large subunit binding"/>
    <property type="evidence" value="ECO:0007669"/>
    <property type="project" value="InterPro"/>
</dbReference>
<dbReference type="GO" id="GO:0003727">
    <property type="term" value="F:single-stranded RNA binding"/>
    <property type="evidence" value="ECO:0007669"/>
    <property type="project" value="InterPro"/>
</dbReference>
<dbReference type="GO" id="GO:0034605">
    <property type="term" value="P:cellular response to heat"/>
    <property type="evidence" value="ECO:0007669"/>
    <property type="project" value="InterPro"/>
</dbReference>
<dbReference type="CDD" id="cd00165">
    <property type="entry name" value="S4"/>
    <property type="match status" value="1"/>
</dbReference>
<dbReference type="Gene3D" id="3.10.290.10">
    <property type="entry name" value="RNA-binding S4 domain"/>
    <property type="match status" value="1"/>
</dbReference>
<dbReference type="InterPro" id="IPR025708">
    <property type="entry name" value="HSP15"/>
</dbReference>
<dbReference type="InterPro" id="IPR002942">
    <property type="entry name" value="S4_RNA-bd"/>
</dbReference>
<dbReference type="InterPro" id="IPR036986">
    <property type="entry name" value="S4_RNA-bd_sf"/>
</dbReference>
<dbReference type="NCBIfam" id="NF007673">
    <property type="entry name" value="PRK10348.1"/>
    <property type="match status" value="1"/>
</dbReference>
<dbReference type="Pfam" id="PF01479">
    <property type="entry name" value="S4"/>
    <property type="match status" value="1"/>
</dbReference>
<dbReference type="PIRSF" id="PIRSF016821">
    <property type="entry name" value="HSP15"/>
    <property type="match status" value="1"/>
</dbReference>
<dbReference type="SMART" id="SM00363">
    <property type="entry name" value="S4"/>
    <property type="match status" value="1"/>
</dbReference>
<dbReference type="SUPFAM" id="SSF55174">
    <property type="entry name" value="Alpha-L RNA-binding motif"/>
    <property type="match status" value="1"/>
</dbReference>
<dbReference type="PROSITE" id="PS50889">
    <property type="entry name" value="S4"/>
    <property type="match status" value="1"/>
</dbReference>
<name>HSLR_AERSA</name>
<organism>
    <name type="scientific">Aeromonas salmonicida</name>
    <dbReference type="NCBI Taxonomy" id="645"/>
    <lineage>
        <taxon>Bacteria</taxon>
        <taxon>Pseudomonadati</taxon>
        <taxon>Pseudomonadota</taxon>
        <taxon>Gammaproteobacteria</taxon>
        <taxon>Aeromonadales</taxon>
        <taxon>Aeromonadaceae</taxon>
        <taxon>Aeromonas</taxon>
    </lineage>
</organism>
<keyword id="KW-0238">DNA-binding</keyword>
<keyword id="KW-0694">RNA-binding</keyword>
<evidence type="ECO:0000250" key="1"/>
<evidence type="ECO:0000255" key="2">
    <source>
        <dbReference type="PROSITE-ProRule" id="PRU00182"/>
    </source>
</evidence>
<evidence type="ECO:0000256" key="3">
    <source>
        <dbReference type="SAM" id="MobiDB-lite"/>
    </source>
</evidence>
<evidence type="ECO:0000305" key="4"/>
<protein>
    <recommendedName>
        <fullName>Heat shock protein 15 homolog</fullName>
        <shortName>HSP15</shortName>
    </recommendedName>
</protein>
<accession>Q44264</accession>